<organism evidence="2">
    <name type="scientific">Bauhinia bauhinioides</name>
    <name type="common">Perlebia bauhinoides</name>
    <dbReference type="NCBI Taxonomy" id="166014"/>
    <lineage>
        <taxon>Eukaryota</taxon>
        <taxon>Viridiplantae</taxon>
        <taxon>Streptophyta</taxon>
        <taxon>Embryophyta</taxon>
        <taxon>Tracheophyta</taxon>
        <taxon>Spermatophyta</taxon>
        <taxon>Magnoliopsida</taxon>
        <taxon>eudicotyledons</taxon>
        <taxon>Gunneridae</taxon>
        <taxon>Pentapetalae</taxon>
        <taxon>rosids</taxon>
        <taxon>fabids</taxon>
        <taxon>Fabales</taxon>
        <taxon>Fabaceae</taxon>
        <taxon>Cercidoideae</taxon>
        <taxon>Cercideae</taxon>
        <taxon>Bauhiniinae</taxon>
        <taxon>Bauhinia</taxon>
    </lineage>
</organism>
<name>BBKI_BAUBA</name>
<sequence length="164" mass="17972">SVVVDTNGQPVSNGADAYYLVPVSHGHAGLALAKIGNEAEPRAVVLDPHHRPGLPVRFESPLRINIIKESYFLNIKFGPSSSDSGVWDVIQQDPIGLAVKVTDTKSLLGPFKVEKEGEGYKIVYYPERGQTGLDIGLVHRNDKYYLAVKDGEPCVFKIRKATDE</sequence>
<dbReference type="PDB" id="4ZOT">
    <property type="method" value="X-ray"/>
    <property type="resolution" value="1.40 A"/>
    <property type="chains" value="A=1-164"/>
</dbReference>
<dbReference type="PDB" id="7JOD">
    <property type="method" value="X-ray"/>
    <property type="resolution" value="1.33 A"/>
    <property type="chains" value="I=1-164"/>
</dbReference>
<dbReference type="PDB" id="7JOE">
    <property type="method" value="X-ray"/>
    <property type="resolution" value="2.60 A"/>
    <property type="chains" value="I=1-164"/>
</dbReference>
<dbReference type="PDB" id="7JOS">
    <property type="method" value="X-ray"/>
    <property type="resolution" value="2.10 A"/>
    <property type="chains" value="B/D/F/H/J/L/N=1-164"/>
</dbReference>
<dbReference type="PDB" id="7JOW">
    <property type="method" value="X-ray"/>
    <property type="resolution" value="1.91 A"/>
    <property type="chains" value="I=1-162"/>
</dbReference>
<dbReference type="PDB" id="7JQK">
    <property type="method" value="X-ray"/>
    <property type="resolution" value="1.33 A"/>
    <property type="chains" value="I=1-164"/>
</dbReference>
<dbReference type="PDB" id="7JQN">
    <property type="method" value="X-ray"/>
    <property type="resolution" value="1.50 A"/>
    <property type="chains" value="I=1-164"/>
</dbReference>
<dbReference type="PDB" id="7JQO">
    <property type="method" value="X-ray"/>
    <property type="resolution" value="1.60 A"/>
    <property type="chains" value="I=1-164"/>
</dbReference>
<dbReference type="PDB" id="7JQV">
    <property type="method" value="X-ray"/>
    <property type="resolution" value="2.10 A"/>
    <property type="chains" value="I=1-164"/>
</dbReference>
<dbReference type="PDB" id="7JR1">
    <property type="method" value="X-ray"/>
    <property type="resolution" value="2.05 A"/>
    <property type="chains" value="G/H/I/J/K/L=1-162"/>
</dbReference>
<dbReference type="PDB" id="7JR2">
    <property type="method" value="X-ray"/>
    <property type="resolution" value="1.85 A"/>
    <property type="chains" value="G/H/I/J/K/L=1-162"/>
</dbReference>
<dbReference type="PDB" id="7JRX">
    <property type="method" value="X-ray"/>
    <property type="resolution" value="1.77 A"/>
    <property type="chains" value="I/i=1-164"/>
</dbReference>
<dbReference type="PDBsum" id="4ZOT"/>
<dbReference type="PDBsum" id="7JOD"/>
<dbReference type="PDBsum" id="7JOE"/>
<dbReference type="PDBsum" id="7JOS"/>
<dbReference type="PDBsum" id="7JOW"/>
<dbReference type="PDBsum" id="7JQK"/>
<dbReference type="PDBsum" id="7JQN"/>
<dbReference type="PDBsum" id="7JQO"/>
<dbReference type="PDBsum" id="7JQV"/>
<dbReference type="PDBsum" id="7JR1"/>
<dbReference type="PDBsum" id="7JR2"/>
<dbReference type="PDBsum" id="7JRX"/>
<dbReference type="SMR" id="P83052"/>
<dbReference type="EvolutionaryTrace" id="P83052"/>
<dbReference type="GO" id="GO:0005576">
    <property type="term" value="C:extracellular region"/>
    <property type="evidence" value="ECO:0007669"/>
    <property type="project" value="UniProtKB-SubCell"/>
</dbReference>
<dbReference type="GO" id="GO:0004867">
    <property type="term" value="F:serine-type endopeptidase inhibitor activity"/>
    <property type="evidence" value="ECO:0007669"/>
    <property type="project" value="UniProtKB-KW"/>
</dbReference>
<dbReference type="CDD" id="cd23364">
    <property type="entry name" value="beta-trefoil_STI_BbKI-like"/>
    <property type="match status" value="1"/>
</dbReference>
<dbReference type="Gene3D" id="2.80.10.50">
    <property type="match status" value="1"/>
</dbReference>
<dbReference type="InterPro" id="IPR011065">
    <property type="entry name" value="Kunitz_inhibitor_STI-like_sf"/>
</dbReference>
<dbReference type="InterPro" id="IPR002160">
    <property type="entry name" value="Prot_inh_Kunz-lg"/>
</dbReference>
<dbReference type="PANTHER" id="PTHR33107">
    <property type="entry name" value="KUNITZ TRYPSIN INHIBITOR 2"/>
    <property type="match status" value="1"/>
</dbReference>
<dbReference type="PANTHER" id="PTHR33107:SF5">
    <property type="entry name" value="KUNITZ TRYPSIN INHIBITOR 5"/>
    <property type="match status" value="1"/>
</dbReference>
<dbReference type="Pfam" id="PF00197">
    <property type="entry name" value="Kunitz_legume"/>
    <property type="match status" value="1"/>
</dbReference>
<dbReference type="SMART" id="SM00452">
    <property type="entry name" value="STI"/>
    <property type="match status" value="1"/>
</dbReference>
<dbReference type="SUPFAM" id="SSF50386">
    <property type="entry name" value="STI-like"/>
    <property type="match status" value="1"/>
</dbReference>
<evidence type="ECO:0000269" key="1">
    <source>
    </source>
</evidence>
<evidence type="ECO:0000305" key="2"/>
<evidence type="ECO:0007829" key="3">
    <source>
        <dbReference type="PDB" id="4ZOT"/>
    </source>
</evidence>
<evidence type="ECO:0007829" key="4">
    <source>
        <dbReference type="PDB" id="7JOD"/>
    </source>
</evidence>
<proteinExistence type="evidence at protein level"/>
<protein>
    <recommendedName>
        <fullName>Kunitz-type serine protease inhibitor BbKI</fullName>
    </recommendedName>
</protein>
<keyword id="KW-0002">3D-structure</keyword>
<keyword id="KW-0903">Direct protein sequencing</keyword>
<keyword id="KW-0646">Protease inhibitor</keyword>
<keyword id="KW-0964">Secreted</keyword>
<keyword id="KW-0722">Serine protease inhibitor</keyword>
<reference evidence="2" key="1">
    <citation type="journal article" date="2001" name="Curr. Med. Chem.">
        <title>Bauhinia bauhinioides plasma kallikrein inhibitor: interaction with synthetic peptides and fluorogenic peptide substrates related to the reactive site sequence.</title>
        <authorList>
            <person name="Oliva M.L.V."/>
            <person name="Mendes C.R."/>
            <person name="Santomauro-Vaz E.M."/>
            <person name="Juliano M.A."/>
            <person name="Mentele R."/>
            <person name="Auerswald E.A."/>
            <person name="Sampaio M.U."/>
            <person name="Sampaio C.A.M."/>
        </authorList>
    </citation>
    <scope>PROTEIN SEQUENCE</scope>
    <scope>FUNCTION</scope>
    <scope>SUBUNIT</scope>
    <source>
        <tissue>Seed</tissue>
    </source>
</reference>
<accession>P83052</accession>
<comment type="function">
    <text evidence="1">Inhibits bovine trypsin, human plasma kallikrein and plasmin and weakly bovine chymotrypsin.</text>
</comment>
<comment type="biophysicochemical properties">
    <temperatureDependence>
        <text>Thermolabile.</text>
    </temperatureDependence>
</comment>
<comment type="subunit">
    <text evidence="1">Monomer.</text>
</comment>
<comment type="subcellular location">
    <subcellularLocation>
        <location>Secreted</location>
    </subcellularLocation>
</comment>
<comment type="similarity">
    <text evidence="2">Belongs to the protease inhibitor I3 (leguminous Kunitz-type inhibitor) family.</text>
</comment>
<feature type="chain" id="PRO_0000083295" description="Kunitz-type serine protease inhibitor BbKI">
    <location>
        <begin position="1"/>
        <end position="164"/>
    </location>
</feature>
<feature type="strand" evidence="4">
    <location>
        <begin position="12"/>
        <end position="16"/>
    </location>
</feature>
<feature type="strand" evidence="4">
    <location>
        <begin position="18"/>
        <end position="22"/>
    </location>
</feature>
<feature type="strand" evidence="4">
    <location>
        <begin position="29"/>
        <end position="33"/>
    </location>
</feature>
<feature type="strand" evidence="3">
    <location>
        <begin position="35"/>
        <end position="37"/>
    </location>
</feature>
<feature type="strand" evidence="4">
    <location>
        <begin position="43"/>
        <end position="47"/>
    </location>
</feature>
<feature type="strand" evidence="4">
    <location>
        <begin position="51"/>
        <end position="53"/>
    </location>
</feature>
<feature type="strand" evidence="4">
    <location>
        <begin position="56"/>
        <end position="59"/>
    </location>
</feature>
<feature type="strand" evidence="4">
    <location>
        <begin position="61"/>
        <end position="63"/>
    </location>
</feature>
<feature type="strand" evidence="4">
    <location>
        <begin position="73"/>
        <end position="78"/>
    </location>
</feature>
<feature type="strand" evidence="4">
    <location>
        <begin position="86"/>
        <end position="92"/>
    </location>
</feature>
<feature type="turn" evidence="4">
    <location>
        <begin position="93"/>
        <end position="95"/>
    </location>
</feature>
<feature type="strand" evidence="4">
    <location>
        <begin position="96"/>
        <end position="103"/>
    </location>
</feature>
<feature type="strand" evidence="4">
    <location>
        <begin position="110"/>
        <end position="116"/>
    </location>
</feature>
<feature type="strand" evidence="4">
    <location>
        <begin position="119"/>
        <end position="124"/>
    </location>
</feature>
<feature type="helix" evidence="4">
    <location>
        <begin position="126"/>
        <end position="128"/>
    </location>
</feature>
<feature type="strand" evidence="4">
    <location>
        <begin position="133"/>
        <end position="140"/>
    </location>
</feature>
<feature type="strand" evidence="4">
    <location>
        <begin position="143"/>
        <end position="148"/>
    </location>
</feature>
<feature type="strand" evidence="4">
    <location>
        <begin position="156"/>
        <end position="160"/>
    </location>
</feature>